<gene>
    <name evidence="1" type="primary">atpF</name>
    <name type="ordered locus">Shewmr4_3929</name>
</gene>
<sequence length="156" mass="17339">MNFNATLIGQTVAFIIFVWFCMKFVWPPLMNAIEARQKRIADGLADADRAVKDLELAQAKATDQLKEAKVTANEIIEQANKRKAQIVEEAKAEADAERAKIIAQGKAEIEAERNRVKEDLRKQVATLAIMGAEKILERSIDPAAHSDIVNKLVAEI</sequence>
<keyword id="KW-0066">ATP synthesis</keyword>
<keyword id="KW-0997">Cell inner membrane</keyword>
<keyword id="KW-1003">Cell membrane</keyword>
<keyword id="KW-0138">CF(0)</keyword>
<keyword id="KW-0375">Hydrogen ion transport</keyword>
<keyword id="KW-0406">Ion transport</keyword>
<keyword id="KW-0472">Membrane</keyword>
<keyword id="KW-0812">Transmembrane</keyword>
<keyword id="KW-1133">Transmembrane helix</keyword>
<keyword id="KW-0813">Transport</keyword>
<accession>Q0HD75</accession>
<reference key="1">
    <citation type="submission" date="2006-08" db="EMBL/GenBank/DDBJ databases">
        <title>Complete sequence of Shewanella sp. MR-4.</title>
        <authorList>
            <consortium name="US DOE Joint Genome Institute"/>
            <person name="Copeland A."/>
            <person name="Lucas S."/>
            <person name="Lapidus A."/>
            <person name="Barry K."/>
            <person name="Detter J.C."/>
            <person name="Glavina del Rio T."/>
            <person name="Hammon N."/>
            <person name="Israni S."/>
            <person name="Dalin E."/>
            <person name="Tice H."/>
            <person name="Pitluck S."/>
            <person name="Kiss H."/>
            <person name="Brettin T."/>
            <person name="Bruce D."/>
            <person name="Han C."/>
            <person name="Tapia R."/>
            <person name="Gilna P."/>
            <person name="Schmutz J."/>
            <person name="Larimer F."/>
            <person name="Land M."/>
            <person name="Hauser L."/>
            <person name="Kyrpides N."/>
            <person name="Mikhailova N."/>
            <person name="Nealson K."/>
            <person name="Konstantinidis K."/>
            <person name="Klappenbach J."/>
            <person name="Tiedje J."/>
            <person name="Richardson P."/>
        </authorList>
    </citation>
    <scope>NUCLEOTIDE SEQUENCE [LARGE SCALE GENOMIC DNA]</scope>
    <source>
        <strain>MR-4</strain>
    </source>
</reference>
<name>ATPF_SHESM</name>
<comment type="function">
    <text evidence="1">F(1)F(0) ATP synthase produces ATP from ADP in the presence of a proton or sodium gradient. F-type ATPases consist of two structural domains, F(1) containing the extramembraneous catalytic core and F(0) containing the membrane proton channel, linked together by a central stalk and a peripheral stalk. During catalysis, ATP synthesis in the catalytic domain of F(1) is coupled via a rotary mechanism of the central stalk subunits to proton translocation.</text>
</comment>
<comment type="function">
    <text evidence="1">Component of the F(0) channel, it forms part of the peripheral stalk, linking F(1) to F(0).</text>
</comment>
<comment type="subunit">
    <text evidence="1">F-type ATPases have 2 components, F(1) - the catalytic core - and F(0) - the membrane proton channel. F(1) has five subunits: alpha(3), beta(3), gamma(1), delta(1), epsilon(1). F(0) has three main subunits: a(1), b(2) and c(10-14). The alpha and beta chains form an alternating ring which encloses part of the gamma chain. F(1) is attached to F(0) by a central stalk formed by the gamma and epsilon chains, while a peripheral stalk is formed by the delta and b chains.</text>
</comment>
<comment type="subcellular location">
    <subcellularLocation>
        <location evidence="1">Cell inner membrane</location>
        <topology evidence="1">Single-pass membrane protein</topology>
    </subcellularLocation>
</comment>
<comment type="similarity">
    <text evidence="1">Belongs to the ATPase B chain family.</text>
</comment>
<dbReference type="EMBL" id="CP000446">
    <property type="protein sequence ID" value="ABI40992.1"/>
    <property type="molecule type" value="Genomic_DNA"/>
</dbReference>
<dbReference type="RefSeq" id="WP_011624650.1">
    <property type="nucleotide sequence ID" value="NC_008321.1"/>
</dbReference>
<dbReference type="SMR" id="Q0HD75"/>
<dbReference type="GeneID" id="94725962"/>
<dbReference type="KEGG" id="she:Shewmr4_3929"/>
<dbReference type="HOGENOM" id="CLU_079215_4_5_6"/>
<dbReference type="GO" id="GO:0005886">
    <property type="term" value="C:plasma membrane"/>
    <property type="evidence" value="ECO:0007669"/>
    <property type="project" value="UniProtKB-SubCell"/>
</dbReference>
<dbReference type="GO" id="GO:0045259">
    <property type="term" value="C:proton-transporting ATP synthase complex"/>
    <property type="evidence" value="ECO:0007669"/>
    <property type="project" value="UniProtKB-KW"/>
</dbReference>
<dbReference type="GO" id="GO:0046933">
    <property type="term" value="F:proton-transporting ATP synthase activity, rotational mechanism"/>
    <property type="evidence" value="ECO:0007669"/>
    <property type="project" value="UniProtKB-UniRule"/>
</dbReference>
<dbReference type="GO" id="GO:0046961">
    <property type="term" value="F:proton-transporting ATPase activity, rotational mechanism"/>
    <property type="evidence" value="ECO:0007669"/>
    <property type="project" value="TreeGrafter"/>
</dbReference>
<dbReference type="CDD" id="cd06503">
    <property type="entry name" value="ATP-synt_Fo_b"/>
    <property type="match status" value="1"/>
</dbReference>
<dbReference type="FunFam" id="1.20.5.620:FF:000001">
    <property type="entry name" value="ATP synthase subunit b"/>
    <property type="match status" value="1"/>
</dbReference>
<dbReference type="Gene3D" id="1.20.5.620">
    <property type="entry name" value="F1F0 ATP synthase subunit B, membrane domain"/>
    <property type="match status" value="1"/>
</dbReference>
<dbReference type="HAMAP" id="MF_01398">
    <property type="entry name" value="ATP_synth_b_bprime"/>
    <property type="match status" value="1"/>
</dbReference>
<dbReference type="InterPro" id="IPR028987">
    <property type="entry name" value="ATP_synth_B-like_membr_sf"/>
</dbReference>
<dbReference type="InterPro" id="IPR002146">
    <property type="entry name" value="ATP_synth_b/b'su_bac/chlpt"/>
</dbReference>
<dbReference type="InterPro" id="IPR005864">
    <property type="entry name" value="ATP_synth_F0_bsu_bac"/>
</dbReference>
<dbReference type="InterPro" id="IPR050059">
    <property type="entry name" value="ATP_synthase_B_chain"/>
</dbReference>
<dbReference type="NCBIfam" id="TIGR01144">
    <property type="entry name" value="ATP_synt_b"/>
    <property type="match status" value="1"/>
</dbReference>
<dbReference type="NCBIfam" id="NF004411">
    <property type="entry name" value="PRK05759.1-2"/>
    <property type="match status" value="1"/>
</dbReference>
<dbReference type="NCBIfam" id="NF004413">
    <property type="entry name" value="PRK05759.1-4"/>
    <property type="match status" value="1"/>
</dbReference>
<dbReference type="PANTHER" id="PTHR33445:SF1">
    <property type="entry name" value="ATP SYNTHASE SUBUNIT B"/>
    <property type="match status" value="1"/>
</dbReference>
<dbReference type="PANTHER" id="PTHR33445">
    <property type="entry name" value="ATP SYNTHASE SUBUNIT B', CHLOROPLASTIC"/>
    <property type="match status" value="1"/>
</dbReference>
<dbReference type="Pfam" id="PF00430">
    <property type="entry name" value="ATP-synt_B"/>
    <property type="match status" value="1"/>
</dbReference>
<dbReference type="SUPFAM" id="SSF81573">
    <property type="entry name" value="F1F0 ATP synthase subunit B, membrane domain"/>
    <property type="match status" value="1"/>
</dbReference>
<feature type="chain" id="PRO_0000368766" description="ATP synthase subunit b">
    <location>
        <begin position="1"/>
        <end position="156"/>
    </location>
</feature>
<feature type="transmembrane region" description="Helical" evidence="1">
    <location>
        <begin position="7"/>
        <end position="27"/>
    </location>
</feature>
<organism>
    <name type="scientific">Shewanella sp. (strain MR-4)</name>
    <dbReference type="NCBI Taxonomy" id="60480"/>
    <lineage>
        <taxon>Bacteria</taxon>
        <taxon>Pseudomonadati</taxon>
        <taxon>Pseudomonadota</taxon>
        <taxon>Gammaproteobacteria</taxon>
        <taxon>Alteromonadales</taxon>
        <taxon>Shewanellaceae</taxon>
        <taxon>Shewanella</taxon>
    </lineage>
</organism>
<protein>
    <recommendedName>
        <fullName evidence="1">ATP synthase subunit b</fullName>
    </recommendedName>
    <alternativeName>
        <fullName evidence="1">ATP synthase F(0) sector subunit b</fullName>
    </alternativeName>
    <alternativeName>
        <fullName evidence="1">ATPase subunit I</fullName>
    </alternativeName>
    <alternativeName>
        <fullName evidence="1">F-type ATPase subunit b</fullName>
        <shortName evidence="1">F-ATPase subunit b</shortName>
    </alternativeName>
</protein>
<proteinExistence type="inferred from homology"/>
<evidence type="ECO:0000255" key="1">
    <source>
        <dbReference type="HAMAP-Rule" id="MF_01398"/>
    </source>
</evidence>